<accession>Q9R160</accession>
<accession>A6H683</accession>
<accession>E9QL68</accession>
<comment type="function">
    <text evidence="13">Plasma membrane protease present on mature sperm that may be involved in sperm function during epididymal maturation and/or fertilization.</text>
</comment>
<comment type="cofactor">
    <cofactor evidence="1">
        <name>Zn(2+)</name>
        <dbReference type="ChEBI" id="CHEBI:29105"/>
    </cofactor>
    <text evidence="1">Binds 1 zinc ion per subunit.</text>
</comment>
<comment type="subunit">
    <text evidence="9">Monomer.</text>
</comment>
<comment type="subcellular location">
    <subcellularLocation>
        <location evidence="9">Membrane</location>
        <topology evidence="2">Single-pass type I membrane protein</topology>
    </subcellularLocation>
    <text evidence="9">Localized to the equatorial region of the plasma membrane of cauda epididymal sperm.</text>
</comment>
<comment type="tissue specificity">
    <text evidence="8 9 10">Expressed exclusively in testis and more specifically on the surface of mature sperm (at protein level).</text>
</comment>
<comment type="developmental stage">
    <text evidence="8">Adult expression levels are reached by day 20 after birth.</text>
</comment>
<comment type="domain">
    <text>The conserved cysteine present in the cysteine-switch motif binds the catalytic zinc ion, thus inhibiting the enzyme. The dissociation of the cysteine from the zinc ion upon the activation-peptide release activates the enzyme.</text>
</comment>
<comment type="PTM">
    <text>The prodomain is removed during sperm passage through the caput epididymis after the protein has reached the cell surface. Not processed in the secretory pathway.</text>
</comment>
<sequence>MVAMSEALVHARITLLQAWLRMLLFSSVWPPTWCAEYKGPPETVKPLRVIVSSKDMSLAGWMSYSLYFGGQRHIISMKSKNFLESRQLPVFTYNDQGVLFEDRPFVQNDCYYLGFVDGDLESMAALTTCFGGFQGILQINDTAYEIKPKSPSSTFEHLLYKIDSEKTQLRPMRCGLTDEEIAGQVRLQENGKSTRMQSIYGSWWSHGLYIKLALVIDHEQYLYRKKNTSLVIRDVLSIMQGINLFLLSVDINVVLLGLTIWTNGNPIPVQDIYALLPAFCTWKGTNLDSQIPYDIAHLFVNYTFSNYFGIAYVGTVCDKTFGCGIDSIAEDDFLTIGHIVAHEIGHNLGMSHDGILCTCGEESCLMSATMDSSQKLSNCSYEVLWAHMINKSCIHREPRPSDIFQLKVCGNGIVEEGEQCDCGSSENCRRNRCCMPSCTLRSKAKCDTGLCCNRKCQIQPSGTLCRARENECDLPEWCNGTSHECPEDLFVQDGTSCPGDGYCYEKRCNSHDVHCQRVFGQLAMKASDSCYKELNTRGDRFGNCGFINNEYVRCEISDILCGRIQCDKVGTLPILQNHYTIHWTHFNSVSCWSTDYHLGMKIADLGDIKDGTNCGPQHVCIARKCVNKPSWVNDCTPETCNMKGVCNNKQHCHCDVGWSPPNCQETGTGGSIDSGSPGNEVYEDEVVSKKDAPEKPNVIIWLLPIICVAVVLSVLFCLSGATKKSREAAASQPAEERVKPPYEGAEPSYETVKPPDEWANP</sequence>
<reference key="1">
    <citation type="journal article" date="1999" name="Gene">
        <title>Identification of four novel ADAMs with potential roles in spermatogenesis and fertilization.</title>
        <authorList>
            <person name="Zhu G.-Z."/>
            <person name="Lin Y."/>
            <person name="Myles D.G."/>
            <person name="Primakoff P."/>
        </authorList>
    </citation>
    <scope>NUCLEOTIDE SEQUENCE [MRNA]</scope>
    <scope>TISSUE SPECIFICITY</scope>
    <scope>DEVELOPMENTAL STAGE</scope>
    <source>
        <tissue>Testis</tissue>
    </source>
</reference>
<reference key="2">
    <citation type="journal article" date="2009" name="PLoS Biol.">
        <title>Lineage-specific biology revealed by a finished genome assembly of the mouse.</title>
        <authorList>
            <person name="Church D.M."/>
            <person name="Goodstadt L."/>
            <person name="Hillier L.W."/>
            <person name="Zody M.C."/>
            <person name="Goldstein S."/>
            <person name="She X."/>
            <person name="Bult C.J."/>
            <person name="Agarwala R."/>
            <person name="Cherry J.L."/>
            <person name="DiCuccio M."/>
            <person name="Hlavina W."/>
            <person name="Kapustin Y."/>
            <person name="Meric P."/>
            <person name="Maglott D."/>
            <person name="Birtle Z."/>
            <person name="Marques A.C."/>
            <person name="Graves T."/>
            <person name="Zhou S."/>
            <person name="Teague B."/>
            <person name="Potamousis K."/>
            <person name="Churas C."/>
            <person name="Place M."/>
            <person name="Herschleb J."/>
            <person name="Runnheim R."/>
            <person name="Forrest D."/>
            <person name="Amos-Landgraf J."/>
            <person name="Schwartz D.C."/>
            <person name="Cheng Z."/>
            <person name="Lindblad-Toh K."/>
            <person name="Eichler E.E."/>
            <person name="Ponting C.P."/>
        </authorList>
    </citation>
    <scope>NUCLEOTIDE SEQUENCE [LARGE SCALE GENOMIC DNA]</scope>
    <source>
        <strain>C57BL/6J</strain>
    </source>
</reference>
<reference key="3">
    <citation type="journal article" date="2004" name="Genome Res.">
        <title>The status, quality, and expansion of the NIH full-length cDNA project: the Mammalian Gene Collection (MGC).</title>
        <authorList>
            <consortium name="The MGC Project Team"/>
        </authorList>
    </citation>
    <scope>NUCLEOTIDE SEQUENCE [LARGE SCALE MRNA]</scope>
    <source>
        <tissue>Testis</tissue>
    </source>
</reference>
<reference key="4">
    <citation type="journal article" date="2001" name="J. Cell Sci.">
        <title>Testase 1 (ADAM 24) a plasma membrane-anchored sperm protease implicated in sperm function during epididymal maturation or fertilization.</title>
        <authorList>
            <person name="Zhu G.-Z."/>
            <person name="Myles D.G."/>
            <person name="Primakoff P."/>
        </authorList>
    </citation>
    <scope>SUBUNIT</scope>
    <scope>SUBCELLULAR LOCATION</scope>
    <scope>TISSUE SPECIFICITY</scope>
</reference>
<reference key="5">
    <citation type="journal article" date="2011" name="J. Cell. Physiol.">
        <title>Identification of heat shock protein 5, calnexin and integral membrane protein 2B as Adam7-interacting membrane proteins in mouse sperm.</title>
        <authorList>
            <person name="Han C."/>
            <person name="Park I."/>
            <person name="Lee B."/>
            <person name="Jin S."/>
            <person name="Choi H."/>
            <person name="Kwon J.T."/>
            <person name="Kwon Y.I."/>
            <person name="Kim D.H."/>
            <person name="Park Z.Y."/>
            <person name="Cho C."/>
        </authorList>
    </citation>
    <scope>TISSUE SPECIFICITY</scope>
</reference>
<evidence type="ECO:0000250" key="1"/>
<evidence type="ECO:0000255" key="2"/>
<evidence type="ECO:0000255" key="3">
    <source>
        <dbReference type="PROSITE-ProRule" id="PRU00068"/>
    </source>
</evidence>
<evidence type="ECO:0000255" key="4">
    <source>
        <dbReference type="PROSITE-ProRule" id="PRU00076"/>
    </source>
</evidence>
<evidence type="ECO:0000255" key="5">
    <source>
        <dbReference type="PROSITE-ProRule" id="PRU00276"/>
    </source>
</evidence>
<evidence type="ECO:0000255" key="6">
    <source>
        <dbReference type="PROSITE-ProRule" id="PRU10095"/>
    </source>
</evidence>
<evidence type="ECO:0000256" key="7">
    <source>
        <dbReference type="SAM" id="MobiDB-lite"/>
    </source>
</evidence>
<evidence type="ECO:0000269" key="8">
    <source>
    </source>
</evidence>
<evidence type="ECO:0000269" key="9">
    <source>
    </source>
</evidence>
<evidence type="ECO:0000269" key="10">
    <source>
    </source>
</evidence>
<evidence type="ECO:0000303" key="11">
    <source>
    </source>
</evidence>
<evidence type="ECO:0000305" key="12"/>
<evidence type="ECO:0000305" key="13">
    <source>
    </source>
</evidence>
<evidence type="ECO:0000312" key="14">
    <source>
        <dbReference type="MGI" id="MGI:105984"/>
    </source>
</evidence>
<dbReference type="EC" id="3.4.24.-"/>
<dbReference type="EMBL" id="AF167402">
    <property type="protein sequence ID" value="AAD48841.1"/>
    <property type="molecule type" value="mRNA"/>
</dbReference>
<dbReference type="EMBL" id="AC158915">
    <property type="status" value="NOT_ANNOTATED_CDS"/>
    <property type="molecule type" value="Genomic_DNA"/>
</dbReference>
<dbReference type="EMBL" id="BC145785">
    <property type="protein sequence ID" value="AAI45786.1"/>
    <property type="molecule type" value="mRNA"/>
</dbReference>
<dbReference type="CCDS" id="CCDS22255.1"/>
<dbReference type="RefSeq" id="NP_034216.3">
    <property type="nucleotide sequence ID" value="NM_010086.5"/>
</dbReference>
<dbReference type="RefSeq" id="XP_006509324.1">
    <property type="nucleotide sequence ID" value="XM_006509261.1"/>
</dbReference>
<dbReference type="SMR" id="Q9R160"/>
<dbReference type="FunCoup" id="Q9R160">
    <property type="interactions" value="12"/>
</dbReference>
<dbReference type="STRING" id="10090.ENSMUSP00000050727"/>
<dbReference type="MEROPS" id="M12.227"/>
<dbReference type="GlyCosmos" id="Q9R160">
    <property type="glycosylation" value="6 sites, No reported glycans"/>
</dbReference>
<dbReference type="GlyGen" id="Q9R160">
    <property type="glycosylation" value="6 sites"/>
</dbReference>
<dbReference type="iPTMnet" id="Q9R160"/>
<dbReference type="PhosphoSitePlus" id="Q9R160"/>
<dbReference type="PaxDb" id="10090-ENSMUSP00000050727"/>
<dbReference type="ProteomicsDB" id="285757"/>
<dbReference type="DNASU" id="13526"/>
<dbReference type="Ensembl" id="ENSMUST00000051614.5">
    <property type="protein sequence ID" value="ENSMUSP00000050727.4"/>
    <property type="gene ID" value="ENSMUSG00000046723.5"/>
</dbReference>
<dbReference type="GeneID" id="13526"/>
<dbReference type="KEGG" id="mmu:13526"/>
<dbReference type="UCSC" id="uc009lnb.1">
    <property type="organism name" value="mouse"/>
</dbReference>
<dbReference type="AGR" id="MGI:105984"/>
<dbReference type="CTD" id="13526"/>
<dbReference type="MGI" id="MGI:105984">
    <property type="gene designation" value="Adam24"/>
</dbReference>
<dbReference type="VEuPathDB" id="HostDB:ENSMUSG00000046723"/>
<dbReference type="eggNOG" id="KOG3607">
    <property type="taxonomic scope" value="Eukaryota"/>
</dbReference>
<dbReference type="GeneTree" id="ENSGT00940000162672"/>
<dbReference type="HOGENOM" id="CLU_012714_4_0_1"/>
<dbReference type="InParanoid" id="Q9R160"/>
<dbReference type="OMA" id="FLTIGHI"/>
<dbReference type="OrthoDB" id="5951731at2759"/>
<dbReference type="PhylomeDB" id="Q9R160"/>
<dbReference type="TreeFam" id="TF314733"/>
<dbReference type="BioGRID-ORCS" id="13526">
    <property type="hits" value="1 hit in 76 CRISPR screens"/>
</dbReference>
<dbReference type="PRO" id="PR:Q9R160"/>
<dbReference type="Proteomes" id="UP000000589">
    <property type="component" value="Chromosome 8"/>
</dbReference>
<dbReference type="RNAct" id="Q9R160">
    <property type="molecule type" value="protein"/>
</dbReference>
<dbReference type="Bgee" id="ENSMUSG00000046723">
    <property type="expression patterns" value="Expressed in spermatid and 16 other cell types or tissues"/>
</dbReference>
<dbReference type="GO" id="GO:0009897">
    <property type="term" value="C:external side of plasma membrane"/>
    <property type="evidence" value="ECO:0000314"/>
    <property type="project" value="MGI"/>
</dbReference>
<dbReference type="GO" id="GO:1990913">
    <property type="term" value="C:sperm head plasma membrane"/>
    <property type="evidence" value="ECO:0000314"/>
    <property type="project" value="MGI"/>
</dbReference>
<dbReference type="GO" id="GO:0005178">
    <property type="term" value="F:integrin binding"/>
    <property type="evidence" value="ECO:0000250"/>
    <property type="project" value="MGI"/>
</dbReference>
<dbReference type="GO" id="GO:0046872">
    <property type="term" value="F:metal ion binding"/>
    <property type="evidence" value="ECO:0007669"/>
    <property type="project" value="UniProtKB-KW"/>
</dbReference>
<dbReference type="GO" id="GO:0004222">
    <property type="term" value="F:metalloendopeptidase activity"/>
    <property type="evidence" value="ECO:0007669"/>
    <property type="project" value="InterPro"/>
</dbReference>
<dbReference type="GO" id="GO:0008237">
    <property type="term" value="F:metallopeptidase activity"/>
    <property type="evidence" value="ECO:0000250"/>
    <property type="project" value="MGI"/>
</dbReference>
<dbReference type="GO" id="GO:0030154">
    <property type="term" value="P:cell differentiation"/>
    <property type="evidence" value="ECO:0007669"/>
    <property type="project" value="UniProtKB-KW"/>
</dbReference>
<dbReference type="GO" id="GO:0060468">
    <property type="term" value="P:prevention of polyspermy"/>
    <property type="evidence" value="ECO:0000315"/>
    <property type="project" value="MGI"/>
</dbReference>
<dbReference type="GO" id="GO:0006508">
    <property type="term" value="P:proteolysis"/>
    <property type="evidence" value="ECO:0007669"/>
    <property type="project" value="UniProtKB-KW"/>
</dbReference>
<dbReference type="GO" id="GO:0007283">
    <property type="term" value="P:spermatogenesis"/>
    <property type="evidence" value="ECO:0007669"/>
    <property type="project" value="UniProtKB-KW"/>
</dbReference>
<dbReference type="CDD" id="cd04269">
    <property type="entry name" value="ZnMc_adamalysin_II_like"/>
    <property type="match status" value="1"/>
</dbReference>
<dbReference type="FunFam" id="4.10.70.10:FF:000001">
    <property type="entry name" value="Disintegrin and metalloproteinase domain-containing protein 22"/>
    <property type="match status" value="1"/>
</dbReference>
<dbReference type="Gene3D" id="3.40.390.10">
    <property type="entry name" value="Collagenase (Catalytic Domain)"/>
    <property type="match status" value="1"/>
</dbReference>
<dbReference type="Gene3D" id="4.10.70.10">
    <property type="entry name" value="Disintegrin domain"/>
    <property type="match status" value="1"/>
</dbReference>
<dbReference type="InterPro" id="IPR006586">
    <property type="entry name" value="ADAM_Cys-rich"/>
</dbReference>
<dbReference type="InterPro" id="IPR018358">
    <property type="entry name" value="Disintegrin_CS"/>
</dbReference>
<dbReference type="InterPro" id="IPR001762">
    <property type="entry name" value="Disintegrin_dom"/>
</dbReference>
<dbReference type="InterPro" id="IPR036436">
    <property type="entry name" value="Disintegrin_dom_sf"/>
</dbReference>
<dbReference type="InterPro" id="IPR000742">
    <property type="entry name" value="EGF-like_dom"/>
</dbReference>
<dbReference type="InterPro" id="IPR024079">
    <property type="entry name" value="MetalloPept_cat_dom_sf"/>
</dbReference>
<dbReference type="InterPro" id="IPR001590">
    <property type="entry name" value="Peptidase_M12B"/>
</dbReference>
<dbReference type="InterPro" id="IPR034027">
    <property type="entry name" value="Reprolysin_adamalysin"/>
</dbReference>
<dbReference type="PANTHER" id="PTHR11905">
    <property type="entry name" value="ADAM A DISINTEGRIN AND METALLOPROTEASE DOMAIN"/>
    <property type="match status" value="1"/>
</dbReference>
<dbReference type="PANTHER" id="PTHR11905:SF118">
    <property type="entry name" value="DISINTEGRIN AND METALLOPROTEINASE DOMAIN-CONTAINING PROTEIN 24"/>
    <property type="match status" value="1"/>
</dbReference>
<dbReference type="Pfam" id="PF08516">
    <property type="entry name" value="ADAM_CR"/>
    <property type="match status" value="1"/>
</dbReference>
<dbReference type="Pfam" id="PF00200">
    <property type="entry name" value="Disintegrin"/>
    <property type="match status" value="1"/>
</dbReference>
<dbReference type="Pfam" id="PF01421">
    <property type="entry name" value="Reprolysin"/>
    <property type="match status" value="1"/>
</dbReference>
<dbReference type="SMART" id="SM00608">
    <property type="entry name" value="ACR"/>
    <property type="match status" value="1"/>
</dbReference>
<dbReference type="SMART" id="SM00050">
    <property type="entry name" value="DISIN"/>
    <property type="match status" value="1"/>
</dbReference>
<dbReference type="SUPFAM" id="SSF57552">
    <property type="entry name" value="Blood coagulation inhibitor (disintegrin)"/>
    <property type="match status" value="1"/>
</dbReference>
<dbReference type="SUPFAM" id="SSF55486">
    <property type="entry name" value="Metalloproteases ('zincins'), catalytic domain"/>
    <property type="match status" value="1"/>
</dbReference>
<dbReference type="PROSITE" id="PS50215">
    <property type="entry name" value="ADAM_MEPRO"/>
    <property type="match status" value="1"/>
</dbReference>
<dbReference type="PROSITE" id="PS00427">
    <property type="entry name" value="DISINTEGRIN_1"/>
    <property type="match status" value="1"/>
</dbReference>
<dbReference type="PROSITE" id="PS50214">
    <property type="entry name" value="DISINTEGRIN_2"/>
    <property type="match status" value="1"/>
</dbReference>
<dbReference type="PROSITE" id="PS01186">
    <property type="entry name" value="EGF_2"/>
    <property type="match status" value="1"/>
</dbReference>
<dbReference type="PROSITE" id="PS50026">
    <property type="entry name" value="EGF_3"/>
    <property type="match status" value="1"/>
</dbReference>
<dbReference type="PROSITE" id="PS00142">
    <property type="entry name" value="ZINC_PROTEASE"/>
    <property type="match status" value="1"/>
</dbReference>
<feature type="signal peptide" evidence="2">
    <location>
        <begin position="1"/>
        <end position="34"/>
    </location>
</feature>
<feature type="propeptide" id="PRO_0000029122" evidence="1">
    <location>
        <begin position="35"/>
        <end position="200"/>
    </location>
</feature>
<feature type="chain" id="PRO_0000029123" description="Disintegrin and metalloproteinase domain-containing protein 24">
    <location>
        <begin position="201"/>
        <end position="761"/>
    </location>
</feature>
<feature type="topological domain" description="Extracellular" evidence="2">
    <location>
        <begin position="35"/>
        <end position="697"/>
    </location>
</feature>
<feature type="transmembrane region" description="Helical" evidence="2">
    <location>
        <begin position="698"/>
        <end position="718"/>
    </location>
</feature>
<feature type="topological domain" description="Cytoplasmic" evidence="2">
    <location>
        <begin position="719"/>
        <end position="761"/>
    </location>
</feature>
<feature type="domain" description="Peptidase M12B" evidence="5">
    <location>
        <begin position="208"/>
        <end position="400"/>
    </location>
</feature>
<feature type="domain" description="Disintegrin" evidence="3">
    <location>
        <begin position="406"/>
        <end position="493"/>
    </location>
</feature>
<feature type="domain" description="EGF-like" evidence="4">
    <location>
        <begin position="631"/>
        <end position="664"/>
    </location>
</feature>
<feature type="region of interest" description="Disordered" evidence="7">
    <location>
        <begin position="725"/>
        <end position="761"/>
    </location>
</feature>
<feature type="short sequence motif" description="Cysteine switch" evidence="1">
    <location>
        <begin position="172"/>
        <end position="179"/>
    </location>
</feature>
<feature type="active site" evidence="5 6">
    <location>
        <position position="343"/>
    </location>
</feature>
<feature type="binding site" description="in inhibited form" evidence="1">
    <location>
        <position position="174"/>
    </location>
    <ligand>
        <name>Zn(2+)</name>
        <dbReference type="ChEBI" id="CHEBI:29105"/>
        <note>catalytic</note>
    </ligand>
</feature>
<feature type="binding site" evidence="1">
    <location>
        <position position="342"/>
    </location>
    <ligand>
        <name>Zn(2+)</name>
        <dbReference type="ChEBI" id="CHEBI:29105"/>
        <note>catalytic</note>
    </ligand>
</feature>
<feature type="binding site" evidence="1">
    <location>
        <position position="346"/>
    </location>
    <ligand>
        <name>Zn(2+)</name>
        <dbReference type="ChEBI" id="CHEBI:29105"/>
        <note>catalytic</note>
    </ligand>
</feature>
<feature type="binding site" evidence="1">
    <location>
        <position position="352"/>
    </location>
    <ligand>
        <name>Zn(2+)</name>
        <dbReference type="ChEBI" id="CHEBI:29105"/>
        <note>catalytic</note>
    </ligand>
</feature>
<feature type="glycosylation site" description="N-linked (GlcNAc...) asparagine" evidence="2">
    <location>
        <position position="140"/>
    </location>
</feature>
<feature type="glycosylation site" description="N-linked (GlcNAc...) asparagine" evidence="2">
    <location>
        <position position="227"/>
    </location>
</feature>
<feature type="glycosylation site" description="N-linked (GlcNAc...) asparagine" evidence="2">
    <location>
        <position position="301"/>
    </location>
</feature>
<feature type="glycosylation site" description="N-linked (GlcNAc...) asparagine" evidence="2">
    <location>
        <position position="378"/>
    </location>
</feature>
<feature type="glycosylation site" description="N-linked (GlcNAc...) asparagine" evidence="2">
    <location>
        <position position="390"/>
    </location>
</feature>
<feature type="glycosylation site" description="N-linked (GlcNAc...) asparagine" evidence="2">
    <location>
        <position position="479"/>
    </location>
</feature>
<feature type="disulfide bond" evidence="1">
    <location>
        <begin position="323"/>
        <end position="393"/>
    </location>
</feature>
<feature type="disulfide bond" evidence="1">
    <location>
        <begin position="357"/>
        <end position="379"/>
    </location>
</feature>
<feature type="disulfide bond" evidence="1">
    <location>
        <begin position="359"/>
        <end position="364"/>
    </location>
</feature>
<feature type="disulfide bond" evidence="1">
    <location>
        <begin position="465"/>
        <end position="485"/>
    </location>
</feature>
<feature type="disulfide bond" evidence="1">
    <location>
        <begin position="635"/>
        <end position="646"/>
    </location>
</feature>
<feature type="disulfide bond" evidence="1">
    <location>
        <begin position="640"/>
        <end position="652"/>
    </location>
</feature>
<feature type="disulfide bond" evidence="1">
    <location>
        <begin position="654"/>
        <end position="663"/>
    </location>
</feature>
<feature type="sequence conflict" description="In Ref. 1; AAD48841 and 3; AAI45786." evidence="12" ref="1 3">
    <original>I</original>
    <variation>L</variation>
    <location>
        <position position="162"/>
    </location>
</feature>
<feature type="sequence conflict" description="In Ref. 1; AAD48841 and 3; AAI45786." evidence="12" ref="1 3">
    <original>A</original>
    <variation>E</variation>
    <location>
        <position position="182"/>
    </location>
</feature>
<feature type="sequence conflict" description="In Ref. 1; AAD48841 and 3; AAI45786." evidence="12" ref="1 3">
    <original>R</original>
    <variation>H</variation>
    <location>
        <position position="454"/>
    </location>
</feature>
<feature type="sequence conflict" description="In Ref. 1; AAD48841 and 3; AAI45786." evidence="12" ref="1 3">
    <original>A</original>
    <variation>T</variation>
    <location>
        <position position="603"/>
    </location>
</feature>
<feature type="sequence conflict" description="In Ref. 1; AAD48841 and 3; AAI45786." evidence="12" ref="1 3">
    <original>A</original>
    <variation>D</variation>
    <location>
        <position position="622"/>
    </location>
</feature>
<feature type="sequence conflict" description="In Ref. 1; AAD48841 and 3; AAI45786." evidence="12" ref="1 3">
    <original>EER</original>
    <variation>GET</variation>
    <location>
        <begin position="735"/>
        <end position="737"/>
    </location>
</feature>
<organism>
    <name type="scientific">Mus musculus</name>
    <name type="common">Mouse</name>
    <dbReference type="NCBI Taxonomy" id="10090"/>
    <lineage>
        <taxon>Eukaryota</taxon>
        <taxon>Metazoa</taxon>
        <taxon>Chordata</taxon>
        <taxon>Craniata</taxon>
        <taxon>Vertebrata</taxon>
        <taxon>Euteleostomi</taxon>
        <taxon>Mammalia</taxon>
        <taxon>Eutheria</taxon>
        <taxon>Euarchontoglires</taxon>
        <taxon>Glires</taxon>
        <taxon>Rodentia</taxon>
        <taxon>Myomorpha</taxon>
        <taxon>Muroidea</taxon>
        <taxon>Muridae</taxon>
        <taxon>Murinae</taxon>
        <taxon>Mus</taxon>
        <taxon>Mus</taxon>
    </lineage>
</organism>
<protein>
    <recommendedName>
        <fullName evidence="14">Disintegrin and metalloproteinase domain-containing protein 24</fullName>
        <shortName>ADAM 24</shortName>
        <ecNumber>3.4.24.-</ecNumber>
    </recommendedName>
    <alternativeName>
        <fullName evidence="11">Testase-1</fullName>
    </alternativeName>
</protein>
<keyword id="KW-0217">Developmental protein</keyword>
<keyword id="KW-0221">Differentiation</keyword>
<keyword id="KW-1015">Disulfide bond</keyword>
<keyword id="KW-0245">EGF-like domain</keyword>
<keyword id="KW-0325">Glycoprotein</keyword>
<keyword id="KW-0378">Hydrolase</keyword>
<keyword id="KW-0472">Membrane</keyword>
<keyword id="KW-0479">Metal-binding</keyword>
<keyword id="KW-0482">Metalloprotease</keyword>
<keyword id="KW-0645">Protease</keyword>
<keyword id="KW-1185">Reference proteome</keyword>
<keyword id="KW-0732">Signal</keyword>
<keyword id="KW-0744">Spermatogenesis</keyword>
<keyword id="KW-0812">Transmembrane</keyword>
<keyword id="KW-1133">Transmembrane helix</keyword>
<keyword id="KW-0862">Zinc</keyword>
<keyword id="KW-0865">Zymogen</keyword>
<gene>
    <name evidence="14" type="primary">Adam24</name>
</gene>
<name>ADA24_MOUSE</name>
<proteinExistence type="evidence at protein level"/>